<protein>
    <recommendedName>
        <fullName evidence="1">Carbamoyl phosphate synthase large chain</fullName>
        <ecNumber evidence="1">6.3.4.16</ecNumber>
        <ecNumber evidence="1">6.3.5.5</ecNumber>
    </recommendedName>
    <alternativeName>
        <fullName evidence="1">Carbamoyl phosphate synthetase ammonia chain</fullName>
    </alternativeName>
</protein>
<dbReference type="EC" id="6.3.4.16" evidence="1"/>
<dbReference type="EC" id="6.3.5.5" evidence="1"/>
<dbReference type="EMBL" id="CP000485">
    <property type="protein sequence ID" value="ABK86751.1"/>
    <property type="molecule type" value="Genomic_DNA"/>
</dbReference>
<dbReference type="RefSeq" id="WP_001126121.1">
    <property type="nucleotide sequence ID" value="NC_008600.1"/>
</dbReference>
<dbReference type="SMR" id="A0RHQ8"/>
<dbReference type="KEGG" id="btl:BALH_3516"/>
<dbReference type="HOGENOM" id="CLU_000513_1_0_9"/>
<dbReference type="UniPathway" id="UPA00068">
    <property type="reaction ID" value="UER00171"/>
</dbReference>
<dbReference type="UniPathway" id="UPA00070">
    <property type="reaction ID" value="UER00115"/>
</dbReference>
<dbReference type="GO" id="GO:0005737">
    <property type="term" value="C:cytoplasm"/>
    <property type="evidence" value="ECO:0007669"/>
    <property type="project" value="TreeGrafter"/>
</dbReference>
<dbReference type="GO" id="GO:0005524">
    <property type="term" value="F:ATP binding"/>
    <property type="evidence" value="ECO:0007669"/>
    <property type="project" value="UniProtKB-UniRule"/>
</dbReference>
<dbReference type="GO" id="GO:0004087">
    <property type="term" value="F:carbamoyl-phosphate synthase (ammonia) activity"/>
    <property type="evidence" value="ECO:0007669"/>
    <property type="project" value="RHEA"/>
</dbReference>
<dbReference type="GO" id="GO:0004088">
    <property type="term" value="F:carbamoyl-phosphate synthase (glutamine-hydrolyzing) activity"/>
    <property type="evidence" value="ECO:0007669"/>
    <property type="project" value="UniProtKB-UniRule"/>
</dbReference>
<dbReference type="GO" id="GO:0046872">
    <property type="term" value="F:metal ion binding"/>
    <property type="evidence" value="ECO:0007669"/>
    <property type="project" value="UniProtKB-KW"/>
</dbReference>
<dbReference type="GO" id="GO:0044205">
    <property type="term" value="P:'de novo' UMP biosynthetic process"/>
    <property type="evidence" value="ECO:0007669"/>
    <property type="project" value="UniProtKB-UniRule"/>
</dbReference>
<dbReference type="GO" id="GO:0006541">
    <property type="term" value="P:glutamine metabolic process"/>
    <property type="evidence" value="ECO:0007669"/>
    <property type="project" value="TreeGrafter"/>
</dbReference>
<dbReference type="GO" id="GO:0006526">
    <property type="term" value="P:L-arginine biosynthetic process"/>
    <property type="evidence" value="ECO:0007669"/>
    <property type="project" value="UniProtKB-UniRule"/>
</dbReference>
<dbReference type="CDD" id="cd01424">
    <property type="entry name" value="MGS_CPS_II"/>
    <property type="match status" value="1"/>
</dbReference>
<dbReference type="FunFam" id="1.10.1030.10:FF:000002">
    <property type="entry name" value="Carbamoyl-phosphate synthase large chain"/>
    <property type="match status" value="1"/>
</dbReference>
<dbReference type="FunFam" id="3.30.1490.20:FF:000001">
    <property type="entry name" value="Carbamoyl-phosphate synthase large chain"/>
    <property type="match status" value="1"/>
</dbReference>
<dbReference type="FunFam" id="3.30.470.20:FF:000001">
    <property type="entry name" value="Carbamoyl-phosphate synthase large chain"/>
    <property type="match status" value="1"/>
</dbReference>
<dbReference type="FunFam" id="3.30.470.20:FF:000026">
    <property type="entry name" value="Carbamoyl-phosphate synthase large chain"/>
    <property type="match status" value="1"/>
</dbReference>
<dbReference type="FunFam" id="3.40.50.1380:FF:000011">
    <property type="entry name" value="Carbamoyl-phosphate synthase large chain"/>
    <property type="match status" value="1"/>
</dbReference>
<dbReference type="FunFam" id="3.40.50.20:FF:000001">
    <property type="entry name" value="Carbamoyl-phosphate synthase large chain"/>
    <property type="match status" value="2"/>
</dbReference>
<dbReference type="Gene3D" id="3.40.50.20">
    <property type="match status" value="2"/>
</dbReference>
<dbReference type="Gene3D" id="3.30.1490.20">
    <property type="entry name" value="ATP-grasp fold, A domain"/>
    <property type="match status" value="1"/>
</dbReference>
<dbReference type="Gene3D" id="3.30.470.20">
    <property type="entry name" value="ATP-grasp fold, B domain"/>
    <property type="match status" value="2"/>
</dbReference>
<dbReference type="Gene3D" id="1.10.1030.10">
    <property type="entry name" value="Carbamoyl-phosphate synthetase, large subunit oligomerisation domain"/>
    <property type="match status" value="1"/>
</dbReference>
<dbReference type="Gene3D" id="3.40.50.1380">
    <property type="entry name" value="Methylglyoxal synthase-like domain"/>
    <property type="match status" value="1"/>
</dbReference>
<dbReference type="HAMAP" id="MF_01210_A">
    <property type="entry name" value="CPSase_L_chain_A"/>
    <property type="match status" value="1"/>
</dbReference>
<dbReference type="HAMAP" id="MF_01210_B">
    <property type="entry name" value="CPSase_L_chain_B"/>
    <property type="match status" value="1"/>
</dbReference>
<dbReference type="InterPro" id="IPR011761">
    <property type="entry name" value="ATP-grasp"/>
</dbReference>
<dbReference type="InterPro" id="IPR013815">
    <property type="entry name" value="ATP_grasp_subdomain_1"/>
</dbReference>
<dbReference type="InterPro" id="IPR006275">
    <property type="entry name" value="CarbamoylP_synth_lsu"/>
</dbReference>
<dbReference type="InterPro" id="IPR005480">
    <property type="entry name" value="CarbamoylP_synth_lsu_oligo"/>
</dbReference>
<dbReference type="InterPro" id="IPR036897">
    <property type="entry name" value="CarbamoylP_synth_lsu_oligo_sf"/>
</dbReference>
<dbReference type="InterPro" id="IPR005479">
    <property type="entry name" value="CbamoylP_synth_lsu-like_ATP-bd"/>
</dbReference>
<dbReference type="InterPro" id="IPR005483">
    <property type="entry name" value="CbamoylP_synth_lsu_CPSase_dom"/>
</dbReference>
<dbReference type="InterPro" id="IPR011607">
    <property type="entry name" value="MGS-like_dom"/>
</dbReference>
<dbReference type="InterPro" id="IPR036914">
    <property type="entry name" value="MGS-like_dom_sf"/>
</dbReference>
<dbReference type="InterPro" id="IPR033937">
    <property type="entry name" value="MGS_CPS_CarB"/>
</dbReference>
<dbReference type="InterPro" id="IPR016185">
    <property type="entry name" value="PreATP-grasp_dom_sf"/>
</dbReference>
<dbReference type="NCBIfam" id="TIGR01369">
    <property type="entry name" value="CPSaseII_lrg"/>
    <property type="match status" value="1"/>
</dbReference>
<dbReference type="NCBIfam" id="NF003671">
    <property type="entry name" value="PRK05294.1"/>
    <property type="match status" value="1"/>
</dbReference>
<dbReference type="NCBIfam" id="NF009455">
    <property type="entry name" value="PRK12815.1"/>
    <property type="match status" value="1"/>
</dbReference>
<dbReference type="PANTHER" id="PTHR11405:SF53">
    <property type="entry name" value="CARBAMOYL-PHOSPHATE SYNTHASE [AMMONIA], MITOCHONDRIAL"/>
    <property type="match status" value="1"/>
</dbReference>
<dbReference type="PANTHER" id="PTHR11405">
    <property type="entry name" value="CARBAMOYLTRANSFERASE FAMILY MEMBER"/>
    <property type="match status" value="1"/>
</dbReference>
<dbReference type="Pfam" id="PF02786">
    <property type="entry name" value="CPSase_L_D2"/>
    <property type="match status" value="2"/>
</dbReference>
<dbReference type="Pfam" id="PF02787">
    <property type="entry name" value="CPSase_L_D3"/>
    <property type="match status" value="1"/>
</dbReference>
<dbReference type="Pfam" id="PF02142">
    <property type="entry name" value="MGS"/>
    <property type="match status" value="1"/>
</dbReference>
<dbReference type="PRINTS" id="PR00098">
    <property type="entry name" value="CPSASE"/>
</dbReference>
<dbReference type="SMART" id="SM01096">
    <property type="entry name" value="CPSase_L_D3"/>
    <property type="match status" value="1"/>
</dbReference>
<dbReference type="SMART" id="SM01209">
    <property type="entry name" value="GARS_A"/>
    <property type="match status" value="1"/>
</dbReference>
<dbReference type="SMART" id="SM00851">
    <property type="entry name" value="MGS"/>
    <property type="match status" value="1"/>
</dbReference>
<dbReference type="SUPFAM" id="SSF48108">
    <property type="entry name" value="Carbamoyl phosphate synthetase, large subunit connection domain"/>
    <property type="match status" value="1"/>
</dbReference>
<dbReference type="SUPFAM" id="SSF56059">
    <property type="entry name" value="Glutathione synthetase ATP-binding domain-like"/>
    <property type="match status" value="2"/>
</dbReference>
<dbReference type="SUPFAM" id="SSF52335">
    <property type="entry name" value="Methylglyoxal synthase-like"/>
    <property type="match status" value="1"/>
</dbReference>
<dbReference type="SUPFAM" id="SSF52440">
    <property type="entry name" value="PreATP-grasp domain"/>
    <property type="match status" value="2"/>
</dbReference>
<dbReference type="PROSITE" id="PS50975">
    <property type="entry name" value="ATP_GRASP"/>
    <property type="match status" value="2"/>
</dbReference>
<dbReference type="PROSITE" id="PS00866">
    <property type="entry name" value="CPSASE_1"/>
    <property type="match status" value="2"/>
</dbReference>
<dbReference type="PROSITE" id="PS00867">
    <property type="entry name" value="CPSASE_2"/>
    <property type="match status" value="2"/>
</dbReference>
<dbReference type="PROSITE" id="PS51855">
    <property type="entry name" value="MGS"/>
    <property type="match status" value="1"/>
</dbReference>
<accession>A0RHQ8</accession>
<keyword id="KW-0028">Amino-acid biosynthesis</keyword>
<keyword id="KW-0055">Arginine biosynthesis</keyword>
<keyword id="KW-0067">ATP-binding</keyword>
<keyword id="KW-0436">Ligase</keyword>
<keyword id="KW-0460">Magnesium</keyword>
<keyword id="KW-0464">Manganese</keyword>
<keyword id="KW-0479">Metal-binding</keyword>
<keyword id="KW-0547">Nucleotide-binding</keyword>
<keyword id="KW-0665">Pyrimidine biosynthesis</keyword>
<keyword id="KW-0677">Repeat</keyword>
<proteinExistence type="inferred from homology"/>
<reference key="1">
    <citation type="journal article" date="2007" name="J. Bacteriol.">
        <title>The complete genome sequence of Bacillus thuringiensis Al Hakam.</title>
        <authorList>
            <person name="Challacombe J.F."/>
            <person name="Altherr M.R."/>
            <person name="Xie G."/>
            <person name="Bhotika S.S."/>
            <person name="Brown N."/>
            <person name="Bruce D."/>
            <person name="Campbell C.S."/>
            <person name="Campbell M.L."/>
            <person name="Chen J."/>
            <person name="Chertkov O."/>
            <person name="Cleland C."/>
            <person name="Dimitrijevic M."/>
            <person name="Doggett N.A."/>
            <person name="Fawcett J.J."/>
            <person name="Glavina T."/>
            <person name="Goodwin L.A."/>
            <person name="Green L.D."/>
            <person name="Han C.S."/>
            <person name="Hill K.K."/>
            <person name="Hitchcock P."/>
            <person name="Jackson P.J."/>
            <person name="Keim P."/>
            <person name="Kewalramani A.R."/>
            <person name="Longmire J."/>
            <person name="Lucas S."/>
            <person name="Malfatti S."/>
            <person name="Martinez D."/>
            <person name="McMurry K."/>
            <person name="Meincke L.J."/>
            <person name="Misra M."/>
            <person name="Moseman B.L."/>
            <person name="Mundt M."/>
            <person name="Munk A.C."/>
            <person name="Okinaka R.T."/>
            <person name="Parson-Quintana B."/>
            <person name="Reilly L.P."/>
            <person name="Richardson P."/>
            <person name="Robinson D.L."/>
            <person name="Saunders E."/>
            <person name="Tapia R."/>
            <person name="Tesmer J.G."/>
            <person name="Thayer N."/>
            <person name="Thompson L.S."/>
            <person name="Tice H."/>
            <person name="Ticknor L.O."/>
            <person name="Wills P.L."/>
            <person name="Gilna P."/>
            <person name="Brettin T.S."/>
        </authorList>
    </citation>
    <scope>NUCLEOTIDE SEQUENCE [LARGE SCALE GENOMIC DNA]</scope>
    <source>
        <strain>Al Hakam</strain>
    </source>
</reference>
<name>CARB_BACAH</name>
<sequence length="1072" mass="118536">MPKRLDINTILVIGSGPIVIGQAAEFDYSGTQACQSLKEEGYKVILVNSNPATIMTDTATADKVYIEPLTLEFVSRIIRKERPDAILPTLGGQTGLNMAVELAKSGVLEECGVEILGTKLSAIEQAEDRDLFRTLMQELNEPTPPSEIIHNLDEAYGFVNEIGYPVIVRPAFTLGGTGGGICHNEEELIEIVTSGLKHSPVTQCLLEKSIAGCKEIEYEVMRDSNDNAIVVCNMENIDPVGVHTGDSIVVAPSQTLSDREYQMLRNTSLRIIRALGIEGGCNVQLALDPYSFQYYVIEVNPRVSRSSALASKATGYPIAKLAAKIAVGLTLDEIVNPVTQKTYACFEPALDYVVSKIPRWPFDKFESANRTLGTQMKATGEVMSIGRNLEESLLKAVRSLELGIYHLELDHLKELDKETMKKRIIKADDERLFIVAEAIRQGVTKEEINEWCEMDFFFLQKVENIVNMEREVKANVGNMEVLQTAKEMGFSDHYIAAAWNKTEREIYDMRKGNNMTPVFKMVDTCAAEFESATPYYYSTYADENESIVTDRKSVVVLGSGPIRIGQGVEFDYATVHSVWAIKEAGYEAIIINNNPETVSTDFSISDKLYFEPLTIEDVMHIIDLEKPEGVIVQFGGQTAINLAAKLEEHGVKILGTSLEDLDRAEDRDKFEAALTKLGIPQPVGKTATTVEQAVAIAEEIGYPVLVRPSYVLGGRAMEIVYRQEELLHYMKNAVKVHADHPVLIDRYMVGKEIEVDAISDGENVFIPGIMEHIERAGVHSGDSIGVYPPQSLSEKLKEQIIEHTIALGKGLNIVGLLNIQFVVFKDQVYVIEVNPRASRTVPFLSKITGVPMANVATKVILGQDLVEQGYGTGYHPEEKEVYVKAPVFSFAKLRSVDTTLGPEMKSTGEVMGKDLTLEKALYKGLVASGINIPTHGSVIITVADKDKEEAMEIAKRFHEIGYNLLATAGTAQSLAEQNIPVQVVNKIDSEDYNLLDIIRQGKAQFVINTLTKGKQPARDGFRIRRESVENGVACLTSLDTTRAILRVLESMTFSAHSMKEITQTKRHEVVHA</sequence>
<comment type="function">
    <text evidence="1">Large subunit of the glutamine-dependent carbamoyl phosphate synthetase (CPSase). CPSase catalyzes the formation of carbamoyl phosphate from the ammonia moiety of glutamine, carbonate, and phosphate donated by ATP, constituting the first step of 2 biosynthetic pathways, one leading to arginine and/or urea and the other to pyrimidine nucleotides. The large subunit (synthetase) binds the substrates ammonia (free or transferred from glutamine from the small subunit), hydrogencarbonate and ATP and carries out an ATP-coupled ligase reaction, activating hydrogencarbonate by forming carboxy phosphate which reacts with ammonia to form carbamoyl phosphate.</text>
</comment>
<comment type="catalytic activity">
    <reaction evidence="1">
        <text>hydrogencarbonate + L-glutamine + 2 ATP + H2O = carbamoyl phosphate + L-glutamate + 2 ADP + phosphate + 2 H(+)</text>
        <dbReference type="Rhea" id="RHEA:18633"/>
        <dbReference type="ChEBI" id="CHEBI:15377"/>
        <dbReference type="ChEBI" id="CHEBI:15378"/>
        <dbReference type="ChEBI" id="CHEBI:17544"/>
        <dbReference type="ChEBI" id="CHEBI:29985"/>
        <dbReference type="ChEBI" id="CHEBI:30616"/>
        <dbReference type="ChEBI" id="CHEBI:43474"/>
        <dbReference type="ChEBI" id="CHEBI:58228"/>
        <dbReference type="ChEBI" id="CHEBI:58359"/>
        <dbReference type="ChEBI" id="CHEBI:456216"/>
        <dbReference type="EC" id="6.3.5.5"/>
    </reaction>
</comment>
<comment type="catalytic activity">
    <molecule>Carbamoyl phosphate synthase large chain</molecule>
    <reaction evidence="1">
        <text>hydrogencarbonate + NH4(+) + 2 ATP = carbamoyl phosphate + 2 ADP + phosphate + 2 H(+)</text>
        <dbReference type="Rhea" id="RHEA:18029"/>
        <dbReference type="ChEBI" id="CHEBI:15378"/>
        <dbReference type="ChEBI" id="CHEBI:17544"/>
        <dbReference type="ChEBI" id="CHEBI:28938"/>
        <dbReference type="ChEBI" id="CHEBI:30616"/>
        <dbReference type="ChEBI" id="CHEBI:43474"/>
        <dbReference type="ChEBI" id="CHEBI:58228"/>
        <dbReference type="ChEBI" id="CHEBI:456216"/>
        <dbReference type="EC" id="6.3.4.16"/>
    </reaction>
</comment>
<comment type="cofactor">
    <cofactor evidence="1">
        <name>Mg(2+)</name>
        <dbReference type="ChEBI" id="CHEBI:18420"/>
    </cofactor>
    <cofactor evidence="1">
        <name>Mn(2+)</name>
        <dbReference type="ChEBI" id="CHEBI:29035"/>
    </cofactor>
    <text evidence="1">Binds 4 Mg(2+) or Mn(2+) ions per subunit.</text>
</comment>
<comment type="pathway">
    <text evidence="1">Amino-acid biosynthesis; L-arginine biosynthesis; carbamoyl phosphate from bicarbonate: step 1/1.</text>
</comment>
<comment type="pathway">
    <text evidence="1">Pyrimidine metabolism; UMP biosynthesis via de novo pathway; (S)-dihydroorotate from bicarbonate: step 1/3.</text>
</comment>
<comment type="subunit">
    <text evidence="1">Composed of two chains; the small (or glutamine) chain promotes the hydrolysis of glutamine to ammonia, which is used by the large (or ammonia) chain to synthesize carbamoyl phosphate. Tetramer of heterodimers (alpha,beta)4.</text>
</comment>
<comment type="domain">
    <text evidence="1">The large subunit is composed of 2 ATP-grasp domains that are involved in binding the 2 ATP molecules needed for carbamoyl phosphate synthesis. The N-terminal ATP-grasp domain (referred to as the carboxyphosphate synthetic component) catalyzes the ATP-dependent phosphorylation of hydrogencarbonate to carboxyphosphate and the subsequent nucleophilic attack by ammonia to form a carbamate intermediate. The C-terminal ATP-grasp domain (referred to as the carbamoyl phosphate synthetic component) then catalyzes the phosphorylation of carbamate with the second ATP to form the end product carbamoyl phosphate. The reactive and unstable enzyme intermediates are sequentially channeled from one active site to the next through the interior of the protein over a distance of at least 96 A.</text>
</comment>
<comment type="similarity">
    <text evidence="1">Belongs to the CarB family.</text>
</comment>
<feature type="chain" id="PRO_1000066336" description="Carbamoyl phosphate synthase large chain">
    <location>
        <begin position="1"/>
        <end position="1072"/>
    </location>
</feature>
<feature type="domain" description="ATP-grasp 1" evidence="1">
    <location>
        <begin position="133"/>
        <end position="327"/>
    </location>
</feature>
<feature type="domain" description="ATP-grasp 2" evidence="1">
    <location>
        <begin position="671"/>
        <end position="861"/>
    </location>
</feature>
<feature type="domain" description="MGS-like" evidence="1">
    <location>
        <begin position="930"/>
        <end position="1072"/>
    </location>
</feature>
<feature type="region of interest" description="Carboxyphosphate synthetic domain" evidence="1">
    <location>
        <begin position="1"/>
        <end position="401"/>
    </location>
</feature>
<feature type="region of interest" description="Oligomerization domain" evidence="1">
    <location>
        <begin position="402"/>
        <end position="546"/>
    </location>
</feature>
<feature type="region of interest" description="Carbamoyl phosphate synthetic domain" evidence="1">
    <location>
        <begin position="547"/>
        <end position="929"/>
    </location>
</feature>
<feature type="region of interest" description="Allosteric domain" evidence="1">
    <location>
        <begin position="930"/>
        <end position="1072"/>
    </location>
</feature>
<feature type="binding site" evidence="1">
    <location>
        <position position="129"/>
    </location>
    <ligand>
        <name>ATP</name>
        <dbReference type="ChEBI" id="CHEBI:30616"/>
        <label>1</label>
    </ligand>
</feature>
<feature type="binding site" evidence="1">
    <location>
        <position position="169"/>
    </location>
    <ligand>
        <name>ATP</name>
        <dbReference type="ChEBI" id="CHEBI:30616"/>
        <label>1</label>
    </ligand>
</feature>
<feature type="binding site" evidence="1">
    <location>
        <position position="175"/>
    </location>
    <ligand>
        <name>ATP</name>
        <dbReference type="ChEBI" id="CHEBI:30616"/>
        <label>1</label>
    </ligand>
</feature>
<feature type="binding site" evidence="1">
    <location>
        <position position="176"/>
    </location>
    <ligand>
        <name>ATP</name>
        <dbReference type="ChEBI" id="CHEBI:30616"/>
        <label>1</label>
    </ligand>
</feature>
<feature type="binding site" evidence="1">
    <location>
        <position position="208"/>
    </location>
    <ligand>
        <name>ATP</name>
        <dbReference type="ChEBI" id="CHEBI:30616"/>
        <label>1</label>
    </ligand>
</feature>
<feature type="binding site" evidence="1">
    <location>
        <position position="210"/>
    </location>
    <ligand>
        <name>ATP</name>
        <dbReference type="ChEBI" id="CHEBI:30616"/>
        <label>1</label>
    </ligand>
</feature>
<feature type="binding site" evidence="1">
    <location>
        <position position="215"/>
    </location>
    <ligand>
        <name>ATP</name>
        <dbReference type="ChEBI" id="CHEBI:30616"/>
        <label>1</label>
    </ligand>
</feature>
<feature type="binding site" evidence="1">
    <location>
        <position position="241"/>
    </location>
    <ligand>
        <name>ATP</name>
        <dbReference type="ChEBI" id="CHEBI:30616"/>
        <label>1</label>
    </ligand>
</feature>
<feature type="binding site" evidence="1">
    <location>
        <position position="242"/>
    </location>
    <ligand>
        <name>ATP</name>
        <dbReference type="ChEBI" id="CHEBI:30616"/>
        <label>1</label>
    </ligand>
</feature>
<feature type="binding site" evidence="1">
    <location>
        <position position="243"/>
    </location>
    <ligand>
        <name>ATP</name>
        <dbReference type="ChEBI" id="CHEBI:30616"/>
        <label>1</label>
    </ligand>
</feature>
<feature type="binding site" evidence="1">
    <location>
        <position position="284"/>
    </location>
    <ligand>
        <name>ATP</name>
        <dbReference type="ChEBI" id="CHEBI:30616"/>
        <label>1</label>
    </ligand>
</feature>
<feature type="binding site" evidence="1">
    <location>
        <position position="284"/>
    </location>
    <ligand>
        <name>Mg(2+)</name>
        <dbReference type="ChEBI" id="CHEBI:18420"/>
        <label>1</label>
    </ligand>
</feature>
<feature type="binding site" evidence="1">
    <location>
        <position position="284"/>
    </location>
    <ligand>
        <name>Mn(2+)</name>
        <dbReference type="ChEBI" id="CHEBI:29035"/>
        <label>1</label>
    </ligand>
</feature>
<feature type="binding site" evidence="1">
    <location>
        <position position="298"/>
    </location>
    <ligand>
        <name>ATP</name>
        <dbReference type="ChEBI" id="CHEBI:30616"/>
        <label>1</label>
    </ligand>
</feature>
<feature type="binding site" evidence="1">
    <location>
        <position position="298"/>
    </location>
    <ligand>
        <name>Mg(2+)</name>
        <dbReference type="ChEBI" id="CHEBI:18420"/>
        <label>1</label>
    </ligand>
</feature>
<feature type="binding site" evidence="1">
    <location>
        <position position="298"/>
    </location>
    <ligand>
        <name>Mg(2+)</name>
        <dbReference type="ChEBI" id="CHEBI:18420"/>
        <label>2</label>
    </ligand>
</feature>
<feature type="binding site" evidence="1">
    <location>
        <position position="298"/>
    </location>
    <ligand>
        <name>Mn(2+)</name>
        <dbReference type="ChEBI" id="CHEBI:29035"/>
        <label>1</label>
    </ligand>
</feature>
<feature type="binding site" evidence="1">
    <location>
        <position position="298"/>
    </location>
    <ligand>
        <name>Mn(2+)</name>
        <dbReference type="ChEBI" id="CHEBI:29035"/>
        <label>2</label>
    </ligand>
</feature>
<feature type="binding site" evidence="1">
    <location>
        <position position="300"/>
    </location>
    <ligand>
        <name>Mg(2+)</name>
        <dbReference type="ChEBI" id="CHEBI:18420"/>
        <label>2</label>
    </ligand>
</feature>
<feature type="binding site" evidence="1">
    <location>
        <position position="300"/>
    </location>
    <ligand>
        <name>Mn(2+)</name>
        <dbReference type="ChEBI" id="CHEBI:29035"/>
        <label>2</label>
    </ligand>
</feature>
<feature type="binding site" evidence="1">
    <location>
        <position position="707"/>
    </location>
    <ligand>
        <name>ATP</name>
        <dbReference type="ChEBI" id="CHEBI:30616"/>
        <label>2</label>
    </ligand>
</feature>
<feature type="binding site" evidence="1">
    <location>
        <position position="746"/>
    </location>
    <ligand>
        <name>ATP</name>
        <dbReference type="ChEBI" id="CHEBI:30616"/>
        <label>2</label>
    </ligand>
</feature>
<feature type="binding site" evidence="1">
    <location>
        <position position="752"/>
    </location>
    <ligand>
        <name>ATP</name>
        <dbReference type="ChEBI" id="CHEBI:30616"/>
        <label>2</label>
    </ligand>
</feature>
<feature type="binding site" evidence="1">
    <location>
        <position position="777"/>
    </location>
    <ligand>
        <name>ATP</name>
        <dbReference type="ChEBI" id="CHEBI:30616"/>
        <label>2</label>
    </ligand>
</feature>
<feature type="binding site" evidence="1">
    <location>
        <position position="778"/>
    </location>
    <ligand>
        <name>ATP</name>
        <dbReference type="ChEBI" id="CHEBI:30616"/>
        <label>2</label>
    </ligand>
</feature>
<feature type="binding site" evidence="1">
    <location>
        <position position="779"/>
    </location>
    <ligand>
        <name>ATP</name>
        <dbReference type="ChEBI" id="CHEBI:30616"/>
        <label>2</label>
    </ligand>
</feature>
<feature type="binding site" evidence="1">
    <location>
        <position position="780"/>
    </location>
    <ligand>
        <name>ATP</name>
        <dbReference type="ChEBI" id="CHEBI:30616"/>
        <label>2</label>
    </ligand>
</feature>
<feature type="binding site" evidence="1">
    <location>
        <position position="820"/>
    </location>
    <ligand>
        <name>ATP</name>
        <dbReference type="ChEBI" id="CHEBI:30616"/>
        <label>2</label>
    </ligand>
</feature>
<feature type="binding site" evidence="1">
    <location>
        <position position="820"/>
    </location>
    <ligand>
        <name>Mg(2+)</name>
        <dbReference type="ChEBI" id="CHEBI:18420"/>
        <label>3</label>
    </ligand>
</feature>
<feature type="binding site" evidence="1">
    <location>
        <position position="820"/>
    </location>
    <ligand>
        <name>Mn(2+)</name>
        <dbReference type="ChEBI" id="CHEBI:29035"/>
        <label>3</label>
    </ligand>
</feature>
<feature type="binding site" evidence="1">
    <location>
        <position position="832"/>
    </location>
    <ligand>
        <name>ATP</name>
        <dbReference type="ChEBI" id="CHEBI:30616"/>
        <label>2</label>
    </ligand>
</feature>
<feature type="binding site" evidence="1">
    <location>
        <position position="832"/>
    </location>
    <ligand>
        <name>Mg(2+)</name>
        <dbReference type="ChEBI" id="CHEBI:18420"/>
        <label>3</label>
    </ligand>
</feature>
<feature type="binding site" evidence="1">
    <location>
        <position position="832"/>
    </location>
    <ligand>
        <name>Mg(2+)</name>
        <dbReference type="ChEBI" id="CHEBI:18420"/>
        <label>4</label>
    </ligand>
</feature>
<feature type="binding site" evidence="1">
    <location>
        <position position="832"/>
    </location>
    <ligand>
        <name>Mn(2+)</name>
        <dbReference type="ChEBI" id="CHEBI:29035"/>
        <label>3</label>
    </ligand>
</feature>
<feature type="binding site" evidence="1">
    <location>
        <position position="832"/>
    </location>
    <ligand>
        <name>Mn(2+)</name>
        <dbReference type="ChEBI" id="CHEBI:29035"/>
        <label>4</label>
    </ligand>
</feature>
<feature type="binding site" evidence="1">
    <location>
        <position position="834"/>
    </location>
    <ligand>
        <name>Mg(2+)</name>
        <dbReference type="ChEBI" id="CHEBI:18420"/>
        <label>4</label>
    </ligand>
</feature>
<feature type="binding site" evidence="1">
    <location>
        <position position="834"/>
    </location>
    <ligand>
        <name>Mn(2+)</name>
        <dbReference type="ChEBI" id="CHEBI:29035"/>
        <label>4</label>
    </ligand>
</feature>
<evidence type="ECO:0000255" key="1">
    <source>
        <dbReference type="HAMAP-Rule" id="MF_01210"/>
    </source>
</evidence>
<gene>
    <name evidence="1" type="primary">carB</name>
    <name type="ordered locus">BALH_3516</name>
</gene>
<organism>
    <name type="scientific">Bacillus thuringiensis (strain Al Hakam)</name>
    <dbReference type="NCBI Taxonomy" id="412694"/>
    <lineage>
        <taxon>Bacteria</taxon>
        <taxon>Bacillati</taxon>
        <taxon>Bacillota</taxon>
        <taxon>Bacilli</taxon>
        <taxon>Bacillales</taxon>
        <taxon>Bacillaceae</taxon>
        <taxon>Bacillus</taxon>
        <taxon>Bacillus cereus group</taxon>
    </lineage>
</organism>